<keyword id="KW-0217">Developmental protein</keyword>
<keyword id="KW-0238">DNA-binding</keyword>
<keyword id="KW-0479">Metal-binding</keyword>
<keyword id="KW-0539">Nucleus</keyword>
<keyword id="KW-1185">Reference proteome</keyword>
<keyword id="KW-0677">Repeat</keyword>
<keyword id="KW-0678">Repressor</keyword>
<keyword id="KW-0804">Transcription</keyword>
<keyword id="KW-0805">Transcription regulation</keyword>
<keyword id="KW-0862">Zinc</keyword>
<keyword id="KW-0863">Zinc-finger</keyword>
<dbReference type="EMBL" id="AE013599">
    <property type="protein sequence ID" value="AAF58441.1"/>
    <property type="molecule type" value="Genomic_DNA"/>
</dbReference>
<dbReference type="EMBL" id="AY069605">
    <property type="protein sequence ID" value="AAL39750.1"/>
    <property type="molecule type" value="mRNA"/>
</dbReference>
<dbReference type="RefSeq" id="NP_610826.1">
    <property type="nucleotide sequence ID" value="NM_136982.3"/>
</dbReference>
<dbReference type="SMR" id="Q7K0S9"/>
<dbReference type="BioGRID" id="62194">
    <property type="interactions" value="22"/>
</dbReference>
<dbReference type="FunCoup" id="Q7K0S9">
    <property type="interactions" value="177"/>
</dbReference>
<dbReference type="IntAct" id="Q7K0S9">
    <property type="interactions" value="17"/>
</dbReference>
<dbReference type="STRING" id="7227.FBpp0086902"/>
<dbReference type="GlyGen" id="Q7K0S9">
    <property type="glycosylation" value="1 site"/>
</dbReference>
<dbReference type="PaxDb" id="7227-FBpp0086902"/>
<dbReference type="DNASU" id="36424"/>
<dbReference type="EnsemblMetazoa" id="FBtr0087789">
    <property type="protein sequence ID" value="FBpp0086902"/>
    <property type="gene ID" value="FBgn0033782"/>
</dbReference>
<dbReference type="GeneID" id="36424"/>
<dbReference type="KEGG" id="dme:Dmel_CG3850"/>
<dbReference type="UCSC" id="CG3850-RA">
    <property type="organism name" value="d. melanogaster"/>
</dbReference>
<dbReference type="AGR" id="FB:FBgn0033782"/>
<dbReference type="CTD" id="36424"/>
<dbReference type="FlyBase" id="FBgn0033782">
    <property type="gene designation" value="sug"/>
</dbReference>
<dbReference type="VEuPathDB" id="VectorBase:FBgn0033782"/>
<dbReference type="eggNOG" id="KOG1721">
    <property type="taxonomic scope" value="Eukaryota"/>
</dbReference>
<dbReference type="GeneTree" id="ENSGT00940000158383"/>
<dbReference type="InParanoid" id="Q7K0S9"/>
<dbReference type="OMA" id="SVIMKAQ"/>
<dbReference type="OrthoDB" id="3214149at2759"/>
<dbReference type="PhylomeDB" id="Q7K0S9"/>
<dbReference type="SignaLink" id="Q7K0S9"/>
<dbReference type="BioGRID-ORCS" id="36424">
    <property type="hits" value="0 hits in 1 CRISPR screen"/>
</dbReference>
<dbReference type="GenomeRNAi" id="36424"/>
<dbReference type="PRO" id="PR:Q7K0S9"/>
<dbReference type="Proteomes" id="UP000000803">
    <property type="component" value="Chromosome 2R"/>
</dbReference>
<dbReference type="Bgee" id="FBgn0033782">
    <property type="expression patterns" value="Expressed in fat body cell in dorsal vessel heart and 84 other cell types or tissues"/>
</dbReference>
<dbReference type="ExpressionAtlas" id="Q7K0S9">
    <property type="expression patterns" value="baseline and differential"/>
</dbReference>
<dbReference type="GO" id="GO:0016607">
    <property type="term" value="C:nuclear speck"/>
    <property type="evidence" value="ECO:0000250"/>
    <property type="project" value="UniProtKB"/>
</dbReference>
<dbReference type="GO" id="GO:0005634">
    <property type="term" value="C:nucleus"/>
    <property type="evidence" value="ECO:0000318"/>
    <property type="project" value="GO_Central"/>
</dbReference>
<dbReference type="GO" id="GO:0000981">
    <property type="term" value="F:DNA-binding transcription factor activity, RNA polymerase II-specific"/>
    <property type="evidence" value="ECO:0000318"/>
    <property type="project" value="GO_Central"/>
</dbReference>
<dbReference type="GO" id="GO:0000978">
    <property type="term" value="F:RNA polymerase II cis-regulatory region sequence-specific DNA binding"/>
    <property type="evidence" value="ECO:0000318"/>
    <property type="project" value="GO_Central"/>
</dbReference>
<dbReference type="GO" id="GO:0008270">
    <property type="term" value="F:zinc ion binding"/>
    <property type="evidence" value="ECO:0007669"/>
    <property type="project" value="UniProtKB-KW"/>
</dbReference>
<dbReference type="GO" id="GO:0031670">
    <property type="term" value="P:cellular response to nutrient"/>
    <property type="evidence" value="ECO:0000314"/>
    <property type="project" value="FlyBase"/>
</dbReference>
<dbReference type="GO" id="GO:0007417">
    <property type="term" value="P:central nervous system development"/>
    <property type="evidence" value="ECO:0000318"/>
    <property type="project" value="GO_Central"/>
</dbReference>
<dbReference type="GO" id="GO:0045892">
    <property type="term" value="P:negative regulation of DNA-templated transcription"/>
    <property type="evidence" value="ECO:0000250"/>
    <property type="project" value="UniProtKB"/>
</dbReference>
<dbReference type="GO" id="GO:0000122">
    <property type="term" value="P:negative regulation of transcription by RNA polymerase II"/>
    <property type="evidence" value="ECO:0000314"/>
    <property type="project" value="FlyBase"/>
</dbReference>
<dbReference type="GO" id="GO:0045893">
    <property type="term" value="P:positive regulation of DNA-templated transcription"/>
    <property type="evidence" value="ECO:0000250"/>
    <property type="project" value="UniProtKB"/>
</dbReference>
<dbReference type="GO" id="GO:0045944">
    <property type="term" value="P:positive regulation of transcription by RNA polymerase II"/>
    <property type="evidence" value="ECO:0000318"/>
    <property type="project" value="GO_Central"/>
</dbReference>
<dbReference type="GO" id="GO:0042594">
    <property type="term" value="P:response to starvation"/>
    <property type="evidence" value="ECO:0000315"/>
    <property type="project" value="FlyBase"/>
</dbReference>
<dbReference type="FunFam" id="3.30.160.60:FF:000019">
    <property type="entry name" value="GLI family zinc finger 3"/>
    <property type="match status" value="1"/>
</dbReference>
<dbReference type="FunFam" id="3.30.160.60:FF:000310">
    <property type="entry name" value="GLIS family zinc finger 2"/>
    <property type="match status" value="1"/>
</dbReference>
<dbReference type="FunFam" id="3.30.160.60:FF:000357">
    <property type="entry name" value="GLIS family zinc finger 2"/>
    <property type="match status" value="1"/>
</dbReference>
<dbReference type="FunFam" id="3.30.160.60:FF:000359">
    <property type="entry name" value="GLIS family zinc finger 2"/>
    <property type="match status" value="1"/>
</dbReference>
<dbReference type="Gene3D" id="3.30.160.60">
    <property type="entry name" value="Classic Zinc Finger"/>
    <property type="match status" value="5"/>
</dbReference>
<dbReference type="InterPro" id="IPR043359">
    <property type="entry name" value="GLI-like"/>
</dbReference>
<dbReference type="InterPro" id="IPR056436">
    <property type="entry name" value="Znf-C2H2_ZIC1-5/GLI1-3-like"/>
</dbReference>
<dbReference type="InterPro" id="IPR036236">
    <property type="entry name" value="Znf_C2H2_sf"/>
</dbReference>
<dbReference type="InterPro" id="IPR013087">
    <property type="entry name" value="Znf_C2H2_type"/>
</dbReference>
<dbReference type="PANTHER" id="PTHR45718:SF8">
    <property type="entry name" value="GLIS FAMILY ZINC FINGER 2"/>
    <property type="match status" value="1"/>
</dbReference>
<dbReference type="PANTHER" id="PTHR45718">
    <property type="entry name" value="TRANSCRIPTIONAL ACTIVATOR CUBITUS INTERRUPTUS"/>
    <property type="match status" value="1"/>
</dbReference>
<dbReference type="Pfam" id="PF00096">
    <property type="entry name" value="zf-C2H2"/>
    <property type="match status" value="3"/>
</dbReference>
<dbReference type="Pfam" id="PF23561">
    <property type="entry name" value="zf-C2H2_15"/>
    <property type="match status" value="1"/>
</dbReference>
<dbReference type="SMART" id="SM00355">
    <property type="entry name" value="ZnF_C2H2"/>
    <property type="match status" value="5"/>
</dbReference>
<dbReference type="SUPFAM" id="SSF57667">
    <property type="entry name" value="beta-beta-alpha zinc fingers"/>
    <property type="match status" value="3"/>
</dbReference>
<dbReference type="PROSITE" id="PS00028">
    <property type="entry name" value="ZINC_FINGER_C2H2_1"/>
    <property type="match status" value="4"/>
</dbReference>
<dbReference type="PROSITE" id="PS50157">
    <property type="entry name" value="ZINC_FINGER_C2H2_2"/>
    <property type="match status" value="5"/>
</dbReference>
<feature type="chain" id="PRO_0000286986" description="Zinc finger protein GLIS2 homolog">
    <location>
        <begin position="1"/>
        <end position="384"/>
    </location>
</feature>
<feature type="zinc finger region" description="C2H2-type 1" evidence="2">
    <location>
        <begin position="128"/>
        <end position="153"/>
    </location>
</feature>
<feature type="zinc finger region" description="C2H2-type 2; degenerate" evidence="2">
    <location>
        <begin position="163"/>
        <end position="190"/>
    </location>
</feature>
<feature type="zinc finger region" description="C2H2-type 3" evidence="2">
    <location>
        <begin position="196"/>
        <end position="218"/>
    </location>
</feature>
<feature type="zinc finger region" description="C2H2-type 4" evidence="2">
    <location>
        <begin position="224"/>
        <end position="248"/>
    </location>
</feature>
<feature type="zinc finger region" description="C2H2-type 5" evidence="2">
    <location>
        <begin position="254"/>
        <end position="280"/>
    </location>
</feature>
<feature type="region of interest" description="Disordered" evidence="3">
    <location>
        <begin position="321"/>
        <end position="343"/>
    </location>
</feature>
<accession>Q7K0S9</accession>
<sequence>MDIIQKSIFNSGPHSRGIYEPPLGYFTPYNTPPYIAAYSDSGSWLADHHQHHQQQHQQHQQQMQHIRFPTPPITPPRPIAGYGYRQRTQSVIMKARGQQDELCRSPVEFPDDSKSCSSSSECGTASDFVCNWTDCDRVFDTLDALAQHVTQRHAIASLTDGLYYCRWRGCQRSERGFNARYKMLVHTRTHTKEKPHRCHLCEKSFSRAENLKIHIRSHSGEKPYKCSFEGCQKAYSNSSDRFKHTRTHSMEKPYMCKVAGCQKRYTDPSSLRKHVKTFKHSIHLIASQPLTLPSVPCLLEASSESAFTCLPAASSVESTSSSSSARYYDDSNNEPSDYSLKPKQDAEFSPSYWLGDRQHSYLHSEDFFVKMDVESPLDLRIHRI</sequence>
<gene>
    <name type="primary">sug</name>
    <name type="ORF">CG3850</name>
</gene>
<name>GLIS2_DROME</name>
<comment type="function">
    <text evidence="4">Transcription factor which represses a set of lipase genes involved in fat catabolism.</text>
</comment>
<comment type="subcellular location">
    <subcellularLocation>
        <location evidence="1">Nucleus</location>
    </subcellularLocation>
</comment>
<comment type="developmental stage">
    <text evidence="4">Specifically expressed in gut, fat body and Malpighian tubules of sugar-fed larvae.</text>
</comment>
<comment type="induction">
    <text evidence="4">Strongly and rapidly induced in larvae by maltose, trehalose, glucose, fructose or saccharose, but not by lactose or galactose.</text>
</comment>
<comment type="similarity">
    <text evidence="5">Belongs to the GLI C2H2-type zinc-finger protein family.</text>
</comment>
<evidence type="ECO:0000250" key="1"/>
<evidence type="ECO:0000255" key="2">
    <source>
        <dbReference type="PROSITE-ProRule" id="PRU00042"/>
    </source>
</evidence>
<evidence type="ECO:0000256" key="3">
    <source>
        <dbReference type="SAM" id="MobiDB-lite"/>
    </source>
</evidence>
<evidence type="ECO:0000269" key="4">
    <source>
    </source>
</evidence>
<evidence type="ECO:0000305" key="5"/>
<protein>
    <recommendedName>
        <fullName>Zinc finger protein GLIS2 homolog</fullName>
    </recommendedName>
    <alternativeName>
        <fullName>Protein sugarbabe</fullName>
    </alternativeName>
</protein>
<proteinExistence type="evidence at transcript level"/>
<reference key="1">
    <citation type="journal article" date="2000" name="Science">
        <title>The genome sequence of Drosophila melanogaster.</title>
        <authorList>
            <person name="Adams M.D."/>
            <person name="Celniker S.E."/>
            <person name="Holt R.A."/>
            <person name="Evans C.A."/>
            <person name="Gocayne J.D."/>
            <person name="Amanatides P.G."/>
            <person name="Scherer S.E."/>
            <person name="Li P.W."/>
            <person name="Hoskins R.A."/>
            <person name="Galle R.F."/>
            <person name="George R.A."/>
            <person name="Lewis S.E."/>
            <person name="Richards S."/>
            <person name="Ashburner M."/>
            <person name="Henderson S.N."/>
            <person name="Sutton G.G."/>
            <person name="Wortman J.R."/>
            <person name="Yandell M.D."/>
            <person name="Zhang Q."/>
            <person name="Chen L.X."/>
            <person name="Brandon R.C."/>
            <person name="Rogers Y.-H.C."/>
            <person name="Blazej R.G."/>
            <person name="Champe M."/>
            <person name="Pfeiffer B.D."/>
            <person name="Wan K.H."/>
            <person name="Doyle C."/>
            <person name="Baxter E.G."/>
            <person name="Helt G."/>
            <person name="Nelson C.R."/>
            <person name="Miklos G.L.G."/>
            <person name="Abril J.F."/>
            <person name="Agbayani A."/>
            <person name="An H.-J."/>
            <person name="Andrews-Pfannkoch C."/>
            <person name="Baldwin D."/>
            <person name="Ballew R.M."/>
            <person name="Basu A."/>
            <person name="Baxendale J."/>
            <person name="Bayraktaroglu L."/>
            <person name="Beasley E.M."/>
            <person name="Beeson K.Y."/>
            <person name="Benos P.V."/>
            <person name="Berman B.P."/>
            <person name="Bhandari D."/>
            <person name="Bolshakov S."/>
            <person name="Borkova D."/>
            <person name="Botchan M.R."/>
            <person name="Bouck J."/>
            <person name="Brokstein P."/>
            <person name="Brottier P."/>
            <person name="Burtis K.C."/>
            <person name="Busam D.A."/>
            <person name="Butler H."/>
            <person name="Cadieu E."/>
            <person name="Center A."/>
            <person name="Chandra I."/>
            <person name="Cherry J.M."/>
            <person name="Cawley S."/>
            <person name="Dahlke C."/>
            <person name="Davenport L.B."/>
            <person name="Davies P."/>
            <person name="de Pablos B."/>
            <person name="Delcher A."/>
            <person name="Deng Z."/>
            <person name="Mays A.D."/>
            <person name="Dew I."/>
            <person name="Dietz S.M."/>
            <person name="Dodson K."/>
            <person name="Doup L.E."/>
            <person name="Downes M."/>
            <person name="Dugan-Rocha S."/>
            <person name="Dunkov B.C."/>
            <person name="Dunn P."/>
            <person name="Durbin K.J."/>
            <person name="Evangelista C.C."/>
            <person name="Ferraz C."/>
            <person name="Ferriera S."/>
            <person name="Fleischmann W."/>
            <person name="Fosler C."/>
            <person name="Gabrielian A.E."/>
            <person name="Garg N.S."/>
            <person name="Gelbart W.M."/>
            <person name="Glasser K."/>
            <person name="Glodek A."/>
            <person name="Gong F."/>
            <person name="Gorrell J.H."/>
            <person name="Gu Z."/>
            <person name="Guan P."/>
            <person name="Harris M."/>
            <person name="Harris N.L."/>
            <person name="Harvey D.A."/>
            <person name="Heiman T.J."/>
            <person name="Hernandez J.R."/>
            <person name="Houck J."/>
            <person name="Hostin D."/>
            <person name="Houston K.A."/>
            <person name="Howland T.J."/>
            <person name="Wei M.-H."/>
            <person name="Ibegwam C."/>
            <person name="Jalali M."/>
            <person name="Kalush F."/>
            <person name="Karpen G.H."/>
            <person name="Ke Z."/>
            <person name="Kennison J.A."/>
            <person name="Ketchum K.A."/>
            <person name="Kimmel B.E."/>
            <person name="Kodira C.D."/>
            <person name="Kraft C.L."/>
            <person name="Kravitz S."/>
            <person name="Kulp D."/>
            <person name="Lai Z."/>
            <person name="Lasko P."/>
            <person name="Lei Y."/>
            <person name="Levitsky A.A."/>
            <person name="Li J.H."/>
            <person name="Li Z."/>
            <person name="Liang Y."/>
            <person name="Lin X."/>
            <person name="Liu X."/>
            <person name="Mattei B."/>
            <person name="McIntosh T.C."/>
            <person name="McLeod M.P."/>
            <person name="McPherson D."/>
            <person name="Merkulov G."/>
            <person name="Milshina N.V."/>
            <person name="Mobarry C."/>
            <person name="Morris J."/>
            <person name="Moshrefi A."/>
            <person name="Mount S.M."/>
            <person name="Moy M."/>
            <person name="Murphy B."/>
            <person name="Murphy L."/>
            <person name="Muzny D.M."/>
            <person name="Nelson D.L."/>
            <person name="Nelson D.R."/>
            <person name="Nelson K.A."/>
            <person name="Nixon K."/>
            <person name="Nusskern D.R."/>
            <person name="Pacleb J.M."/>
            <person name="Palazzolo M."/>
            <person name="Pittman G.S."/>
            <person name="Pan S."/>
            <person name="Pollard J."/>
            <person name="Puri V."/>
            <person name="Reese M.G."/>
            <person name="Reinert K."/>
            <person name="Remington K."/>
            <person name="Saunders R.D.C."/>
            <person name="Scheeler F."/>
            <person name="Shen H."/>
            <person name="Shue B.C."/>
            <person name="Siden-Kiamos I."/>
            <person name="Simpson M."/>
            <person name="Skupski M.P."/>
            <person name="Smith T.J."/>
            <person name="Spier E."/>
            <person name="Spradling A.C."/>
            <person name="Stapleton M."/>
            <person name="Strong R."/>
            <person name="Sun E."/>
            <person name="Svirskas R."/>
            <person name="Tector C."/>
            <person name="Turner R."/>
            <person name="Venter E."/>
            <person name="Wang A.H."/>
            <person name="Wang X."/>
            <person name="Wang Z.-Y."/>
            <person name="Wassarman D.A."/>
            <person name="Weinstock G.M."/>
            <person name="Weissenbach J."/>
            <person name="Williams S.M."/>
            <person name="Woodage T."/>
            <person name="Worley K.C."/>
            <person name="Wu D."/>
            <person name="Yang S."/>
            <person name="Yao Q.A."/>
            <person name="Ye J."/>
            <person name="Yeh R.-F."/>
            <person name="Zaveri J.S."/>
            <person name="Zhan M."/>
            <person name="Zhang G."/>
            <person name="Zhao Q."/>
            <person name="Zheng L."/>
            <person name="Zheng X.H."/>
            <person name="Zhong F.N."/>
            <person name="Zhong W."/>
            <person name="Zhou X."/>
            <person name="Zhu S.C."/>
            <person name="Zhu X."/>
            <person name="Smith H.O."/>
            <person name="Gibbs R.A."/>
            <person name="Myers E.W."/>
            <person name="Rubin G.M."/>
            <person name="Venter J.C."/>
        </authorList>
    </citation>
    <scope>NUCLEOTIDE SEQUENCE [LARGE SCALE GENOMIC DNA]</scope>
    <source>
        <strain>Berkeley</strain>
    </source>
</reference>
<reference key="2">
    <citation type="journal article" date="2002" name="Genome Biol.">
        <title>Annotation of the Drosophila melanogaster euchromatic genome: a systematic review.</title>
        <authorList>
            <person name="Misra S."/>
            <person name="Crosby M.A."/>
            <person name="Mungall C.J."/>
            <person name="Matthews B.B."/>
            <person name="Campbell K.S."/>
            <person name="Hradecky P."/>
            <person name="Huang Y."/>
            <person name="Kaminker J.S."/>
            <person name="Millburn G.H."/>
            <person name="Prochnik S.E."/>
            <person name="Smith C.D."/>
            <person name="Tupy J.L."/>
            <person name="Whitfield E.J."/>
            <person name="Bayraktaroglu L."/>
            <person name="Berman B.P."/>
            <person name="Bettencourt B.R."/>
            <person name="Celniker S.E."/>
            <person name="de Grey A.D.N.J."/>
            <person name="Drysdale R.A."/>
            <person name="Harris N.L."/>
            <person name="Richter J."/>
            <person name="Russo S."/>
            <person name="Schroeder A.J."/>
            <person name="Shu S.Q."/>
            <person name="Stapleton M."/>
            <person name="Yamada C."/>
            <person name="Ashburner M."/>
            <person name="Gelbart W.M."/>
            <person name="Rubin G.M."/>
            <person name="Lewis S.E."/>
        </authorList>
    </citation>
    <scope>GENOME REANNOTATION</scope>
    <source>
        <strain>Berkeley</strain>
    </source>
</reference>
<reference key="3">
    <citation type="journal article" date="2002" name="Genome Biol.">
        <title>A Drosophila full-length cDNA resource.</title>
        <authorList>
            <person name="Stapleton M."/>
            <person name="Carlson J.W."/>
            <person name="Brokstein P."/>
            <person name="Yu C."/>
            <person name="Champe M."/>
            <person name="George R.A."/>
            <person name="Guarin H."/>
            <person name="Kronmiller B."/>
            <person name="Pacleb J.M."/>
            <person name="Park S."/>
            <person name="Wan K.H."/>
            <person name="Rubin G.M."/>
            <person name="Celniker S.E."/>
        </authorList>
    </citation>
    <scope>NUCLEOTIDE SEQUENCE [LARGE SCALE MRNA]</scope>
    <source>
        <strain>Berkeley</strain>
        <tissue>Embryo</tissue>
    </source>
</reference>
<reference key="4">
    <citation type="journal article" date="2002" name="EMBO J.">
        <title>Nutrient control of gene expression in Drosophila: microarray analysis of starvation and sugar-dependent response.</title>
        <authorList>
            <person name="Zinke I."/>
            <person name="Schuetz C.S."/>
            <person name="Katzenberger J.D."/>
            <person name="Bauer M."/>
            <person name="Pankratz M.J."/>
        </authorList>
    </citation>
    <scope>INDUCTION</scope>
    <scope>DEVELOPMENTAL STAGE</scope>
    <scope>FUNCTION</scope>
</reference>
<organism>
    <name type="scientific">Drosophila melanogaster</name>
    <name type="common">Fruit fly</name>
    <dbReference type="NCBI Taxonomy" id="7227"/>
    <lineage>
        <taxon>Eukaryota</taxon>
        <taxon>Metazoa</taxon>
        <taxon>Ecdysozoa</taxon>
        <taxon>Arthropoda</taxon>
        <taxon>Hexapoda</taxon>
        <taxon>Insecta</taxon>
        <taxon>Pterygota</taxon>
        <taxon>Neoptera</taxon>
        <taxon>Endopterygota</taxon>
        <taxon>Diptera</taxon>
        <taxon>Brachycera</taxon>
        <taxon>Muscomorpha</taxon>
        <taxon>Ephydroidea</taxon>
        <taxon>Drosophilidae</taxon>
        <taxon>Drosophila</taxon>
        <taxon>Sophophora</taxon>
    </lineage>
</organism>